<reference key="1">
    <citation type="journal article" date="2003" name="Nature">
        <title>The genome sequence of Bacillus anthracis Ames and comparison to closely related bacteria.</title>
        <authorList>
            <person name="Read T.D."/>
            <person name="Peterson S.N."/>
            <person name="Tourasse N.J."/>
            <person name="Baillie L.W."/>
            <person name="Paulsen I.T."/>
            <person name="Nelson K.E."/>
            <person name="Tettelin H."/>
            <person name="Fouts D.E."/>
            <person name="Eisen J.A."/>
            <person name="Gill S.R."/>
            <person name="Holtzapple E.K."/>
            <person name="Okstad O.A."/>
            <person name="Helgason E."/>
            <person name="Rilstone J."/>
            <person name="Wu M."/>
            <person name="Kolonay J.F."/>
            <person name="Beanan M.J."/>
            <person name="Dodson R.J."/>
            <person name="Brinkac L.M."/>
            <person name="Gwinn M.L."/>
            <person name="DeBoy R.T."/>
            <person name="Madpu R."/>
            <person name="Daugherty S.C."/>
            <person name="Durkin A.S."/>
            <person name="Haft D.H."/>
            <person name="Nelson W.C."/>
            <person name="Peterson J.D."/>
            <person name="Pop M."/>
            <person name="Khouri H.M."/>
            <person name="Radune D."/>
            <person name="Benton J.L."/>
            <person name="Mahamoud Y."/>
            <person name="Jiang L."/>
            <person name="Hance I.R."/>
            <person name="Weidman J.F."/>
            <person name="Berry K.J."/>
            <person name="Plaut R.D."/>
            <person name="Wolf A.M."/>
            <person name="Watkins K.L."/>
            <person name="Nierman W.C."/>
            <person name="Hazen A."/>
            <person name="Cline R.T."/>
            <person name="Redmond C."/>
            <person name="Thwaite J.E."/>
            <person name="White O."/>
            <person name="Salzberg S.L."/>
            <person name="Thomason B."/>
            <person name="Friedlander A.M."/>
            <person name="Koehler T.M."/>
            <person name="Hanna P.C."/>
            <person name="Kolstoe A.-B."/>
            <person name="Fraser C.M."/>
        </authorList>
    </citation>
    <scope>NUCLEOTIDE SEQUENCE [LARGE SCALE GENOMIC DNA]</scope>
    <source>
        <strain>Ames / isolate Porton</strain>
    </source>
</reference>
<reference key="2">
    <citation type="journal article" date="2009" name="J. Bacteriol.">
        <title>The complete genome sequence of Bacillus anthracis Ames 'Ancestor'.</title>
        <authorList>
            <person name="Ravel J."/>
            <person name="Jiang L."/>
            <person name="Stanley S.T."/>
            <person name="Wilson M.R."/>
            <person name="Decker R.S."/>
            <person name="Read T.D."/>
            <person name="Worsham P."/>
            <person name="Keim P.S."/>
            <person name="Salzberg S.L."/>
            <person name="Fraser-Liggett C.M."/>
            <person name="Rasko D.A."/>
        </authorList>
    </citation>
    <scope>NUCLEOTIDE SEQUENCE [LARGE SCALE GENOMIC DNA]</scope>
    <source>
        <strain>Ames ancestor</strain>
    </source>
</reference>
<reference key="3">
    <citation type="submission" date="2004-01" db="EMBL/GenBank/DDBJ databases">
        <title>Complete genome sequence of Bacillus anthracis Sterne.</title>
        <authorList>
            <person name="Brettin T.S."/>
            <person name="Bruce D."/>
            <person name="Challacombe J.F."/>
            <person name="Gilna P."/>
            <person name="Han C."/>
            <person name="Hill K."/>
            <person name="Hitchcock P."/>
            <person name="Jackson P."/>
            <person name="Keim P."/>
            <person name="Longmire J."/>
            <person name="Lucas S."/>
            <person name="Okinaka R."/>
            <person name="Richardson P."/>
            <person name="Rubin E."/>
            <person name="Tice H."/>
        </authorList>
    </citation>
    <scope>NUCLEOTIDE SEQUENCE [LARGE SCALE GENOMIC DNA]</scope>
    <source>
        <strain>Sterne</strain>
    </source>
</reference>
<evidence type="ECO:0000255" key="1">
    <source>
        <dbReference type="HAMAP-Rule" id="MF_02002"/>
    </source>
</evidence>
<dbReference type="EC" id="6.1.1.5" evidence="1"/>
<dbReference type="EMBL" id="AE016879">
    <property type="protein sequence ID" value="AAP27760.1"/>
    <property type="molecule type" value="Genomic_DNA"/>
</dbReference>
<dbReference type="EMBL" id="AE017334">
    <property type="protein sequence ID" value="AAT33151.1"/>
    <property type="molecule type" value="Genomic_DNA"/>
</dbReference>
<dbReference type="EMBL" id="AE017225">
    <property type="protein sequence ID" value="AAT56048.1"/>
    <property type="molecule type" value="Genomic_DNA"/>
</dbReference>
<dbReference type="RefSeq" id="NP_846274.1">
    <property type="nucleotide sequence ID" value="NC_003997.3"/>
</dbReference>
<dbReference type="RefSeq" id="YP_029997.1">
    <property type="nucleotide sequence ID" value="NC_005945.1"/>
</dbReference>
<dbReference type="SMR" id="Q81WE4"/>
<dbReference type="IntAct" id="Q81WE4">
    <property type="interactions" value="1"/>
</dbReference>
<dbReference type="STRING" id="261594.GBAA_4034"/>
<dbReference type="DNASU" id="1086630"/>
<dbReference type="GeneID" id="45023724"/>
<dbReference type="KEGG" id="ban:BA_4034"/>
<dbReference type="KEGG" id="bar:GBAA_4034"/>
<dbReference type="KEGG" id="bat:BAS3746"/>
<dbReference type="PATRIC" id="fig|198094.11.peg.4005"/>
<dbReference type="eggNOG" id="COG0060">
    <property type="taxonomic scope" value="Bacteria"/>
</dbReference>
<dbReference type="HOGENOM" id="CLU_001493_7_0_9"/>
<dbReference type="OMA" id="HCWRCKT"/>
<dbReference type="Proteomes" id="UP000000427">
    <property type="component" value="Chromosome"/>
</dbReference>
<dbReference type="Proteomes" id="UP000000594">
    <property type="component" value="Chromosome"/>
</dbReference>
<dbReference type="GO" id="GO:0005829">
    <property type="term" value="C:cytosol"/>
    <property type="evidence" value="ECO:0007669"/>
    <property type="project" value="TreeGrafter"/>
</dbReference>
<dbReference type="GO" id="GO:0002161">
    <property type="term" value="F:aminoacyl-tRNA deacylase activity"/>
    <property type="evidence" value="ECO:0007669"/>
    <property type="project" value="InterPro"/>
</dbReference>
<dbReference type="GO" id="GO:0005524">
    <property type="term" value="F:ATP binding"/>
    <property type="evidence" value="ECO:0007669"/>
    <property type="project" value="UniProtKB-UniRule"/>
</dbReference>
<dbReference type="GO" id="GO:0004822">
    <property type="term" value="F:isoleucine-tRNA ligase activity"/>
    <property type="evidence" value="ECO:0007669"/>
    <property type="project" value="UniProtKB-UniRule"/>
</dbReference>
<dbReference type="GO" id="GO:0000049">
    <property type="term" value="F:tRNA binding"/>
    <property type="evidence" value="ECO:0007669"/>
    <property type="project" value="InterPro"/>
</dbReference>
<dbReference type="GO" id="GO:0008270">
    <property type="term" value="F:zinc ion binding"/>
    <property type="evidence" value="ECO:0007669"/>
    <property type="project" value="UniProtKB-UniRule"/>
</dbReference>
<dbReference type="GO" id="GO:0006428">
    <property type="term" value="P:isoleucyl-tRNA aminoacylation"/>
    <property type="evidence" value="ECO:0007669"/>
    <property type="project" value="UniProtKB-UniRule"/>
</dbReference>
<dbReference type="CDD" id="cd07960">
    <property type="entry name" value="Anticodon_Ia_Ile_BEm"/>
    <property type="match status" value="1"/>
</dbReference>
<dbReference type="CDD" id="cd00818">
    <property type="entry name" value="IleRS_core"/>
    <property type="match status" value="1"/>
</dbReference>
<dbReference type="FunFam" id="1.10.10.830:FF:000001">
    <property type="entry name" value="Isoleucine--tRNA ligase"/>
    <property type="match status" value="1"/>
</dbReference>
<dbReference type="FunFam" id="1.10.730.20:FF:000001">
    <property type="entry name" value="Isoleucine--tRNA ligase"/>
    <property type="match status" value="1"/>
</dbReference>
<dbReference type="FunFam" id="3.40.50.620:FF:000152">
    <property type="entry name" value="Isoleucine--tRNA ligase"/>
    <property type="match status" value="1"/>
</dbReference>
<dbReference type="FunFam" id="3.90.740.10:FF:000006">
    <property type="entry name" value="Isoleucine--tRNA ligase"/>
    <property type="match status" value="1"/>
</dbReference>
<dbReference type="Gene3D" id="1.10.730.20">
    <property type="match status" value="1"/>
</dbReference>
<dbReference type="Gene3D" id="3.40.50.620">
    <property type="entry name" value="HUPs"/>
    <property type="match status" value="2"/>
</dbReference>
<dbReference type="Gene3D" id="1.10.10.830">
    <property type="entry name" value="Ile-tRNA synthetase CP2 domain-like"/>
    <property type="match status" value="1"/>
</dbReference>
<dbReference type="Gene3D" id="3.90.740.10">
    <property type="entry name" value="Valyl/Leucyl/Isoleucyl-tRNA synthetase, editing domain"/>
    <property type="match status" value="1"/>
</dbReference>
<dbReference type="HAMAP" id="MF_02002">
    <property type="entry name" value="Ile_tRNA_synth_type1"/>
    <property type="match status" value="1"/>
</dbReference>
<dbReference type="InterPro" id="IPR001412">
    <property type="entry name" value="aa-tRNA-synth_I_CS"/>
</dbReference>
<dbReference type="InterPro" id="IPR002300">
    <property type="entry name" value="aa-tRNA-synth_Ia"/>
</dbReference>
<dbReference type="InterPro" id="IPR033708">
    <property type="entry name" value="Anticodon_Ile_BEm"/>
</dbReference>
<dbReference type="InterPro" id="IPR002301">
    <property type="entry name" value="Ile-tRNA-ligase"/>
</dbReference>
<dbReference type="InterPro" id="IPR023585">
    <property type="entry name" value="Ile-tRNA-ligase_type1"/>
</dbReference>
<dbReference type="InterPro" id="IPR050081">
    <property type="entry name" value="Ile-tRNA_ligase"/>
</dbReference>
<dbReference type="InterPro" id="IPR013155">
    <property type="entry name" value="M/V/L/I-tRNA-synth_anticd-bd"/>
</dbReference>
<dbReference type="InterPro" id="IPR014729">
    <property type="entry name" value="Rossmann-like_a/b/a_fold"/>
</dbReference>
<dbReference type="InterPro" id="IPR009080">
    <property type="entry name" value="tRNAsynth_Ia_anticodon-bd"/>
</dbReference>
<dbReference type="InterPro" id="IPR009008">
    <property type="entry name" value="Val/Leu/Ile-tRNA-synth_edit"/>
</dbReference>
<dbReference type="InterPro" id="IPR010663">
    <property type="entry name" value="Znf_FPG/IleRS"/>
</dbReference>
<dbReference type="NCBIfam" id="TIGR00392">
    <property type="entry name" value="ileS"/>
    <property type="match status" value="1"/>
</dbReference>
<dbReference type="PANTHER" id="PTHR42765:SF1">
    <property type="entry name" value="ISOLEUCINE--TRNA LIGASE, MITOCHONDRIAL"/>
    <property type="match status" value="1"/>
</dbReference>
<dbReference type="PANTHER" id="PTHR42765">
    <property type="entry name" value="SOLEUCYL-TRNA SYNTHETASE"/>
    <property type="match status" value="1"/>
</dbReference>
<dbReference type="Pfam" id="PF08264">
    <property type="entry name" value="Anticodon_1"/>
    <property type="match status" value="1"/>
</dbReference>
<dbReference type="Pfam" id="PF00133">
    <property type="entry name" value="tRNA-synt_1"/>
    <property type="match status" value="1"/>
</dbReference>
<dbReference type="Pfam" id="PF06827">
    <property type="entry name" value="zf-FPG_IleRS"/>
    <property type="match status" value="1"/>
</dbReference>
<dbReference type="PRINTS" id="PR00984">
    <property type="entry name" value="TRNASYNTHILE"/>
</dbReference>
<dbReference type="SUPFAM" id="SSF47323">
    <property type="entry name" value="Anticodon-binding domain of a subclass of class I aminoacyl-tRNA synthetases"/>
    <property type="match status" value="1"/>
</dbReference>
<dbReference type="SUPFAM" id="SSF52374">
    <property type="entry name" value="Nucleotidylyl transferase"/>
    <property type="match status" value="1"/>
</dbReference>
<dbReference type="SUPFAM" id="SSF50677">
    <property type="entry name" value="ValRS/IleRS/LeuRS editing domain"/>
    <property type="match status" value="1"/>
</dbReference>
<dbReference type="PROSITE" id="PS00178">
    <property type="entry name" value="AA_TRNA_LIGASE_I"/>
    <property type="match status" value="1"/>
</dbReference>
<feature type="chain" id="PRO_0000098344" description="Isoleucine--tRNA ligase 1">
    <location>
        <begin position="1"/>
        <end position="921"/>
    </location>
</feature>
<feature type="short sequence motif" description="'HIGH' region">
    <location>
        <begin position="57"/>
        <end position="67"/>
    </location>
</feature>
<feature type="short sequence motif" description="'KMSKS' region">
    <location>
        <begin position="593"/>
        <end position="597"/>
    </location>
</feature>
<feature type="binding site" evidence="1">
    <location>
        <position position="552"/>
    </location>
    <ligand>
        <name>L-isoleucyl-5'-AMP</name>
        <dbReference type="ChEBI" id="CHEBI:178002"/>
    </ligand>
</feature>
<feature type="binding site" evidence="1">
    <location>
        <position position="596"/>
    </location>
    <ligand>
        <name>ATP</name>
        <dbReference type="ChEBI" id="CHEBI:30616"/>
    </ligand>
</feature>
<feature type="binding site" evidence="1">
    <location>
        <position position="888"/>
    </location>
    <ligand>
        <name>Zn(2+)</name>
        <dbReference type="ChEBI" id="CHEBI:29105"/>
    </ligand>
</feature>
<feature type="binding site" evidence="1">
    <location>
        <position position="891"/>
    </location>
    <ligand>
        <name>Zn(2+)</name>
        <dbReference type="ChEBI" id="CHEBI:29105"/>
    </ligand>
</feature>
<feature type="binding site" evidence="1">
    <location>
        <position position="908"/>
    </location>
    <ligand>
        <name>Zn(2+)</name>
        <dbReference type="ChEBI" id="CHEBI:29105"/>
    </ligand>
</feature>
<feature type="binding site" evidence="1">
    <location>
        <position position="911"/>
    </location>
    <ligand>
        <name>Zn(2+)</name>
        <dbReference type="ChEBI" id="CHEBI:29105"/>
    </ligand>
</feature>
<accession>Q81WE4</accession>
<accession>Q6HUJ1</accession>
<accession>Q6KNS7</accession>
<gene>
    <name evidence="1" type="primary">ileS1</name>
    <name type="ordered locus">BA_4034</name>
    <name type="ordered locus">GBAA_4034</name>
    <name type="ordered locus">BAS3746</name>
</gene>
<organism>
    <name type="scientific">Bacillus anthracis</name>
    <dbReference type="NCBI Taxonomy" id="1392"/>
    <lineage>
        <taxon>Bacteria</taxon>
        <taxon>Bacillati</taxon>
        <taxon>Bacillota</taxon>
        <taxon>Bacilli</taxon>
        <taxon>Bacillales</taxon>
        <taxon>Bacillaceae</taxon>
        <taxon>Bacillus</taxon>
        <taxon>Bacillus cereus group</taxon>
    </lineage>
</organism>
<keyword id="KW-0030">Aminoacyl-tRNA synthetase</keyword>
<keyword id="KW-0067">ATP-binding</keyword>
<keyword id="KW-0963">Cytoplasm</keyword>
<keyword id="KW-0436">Ligase</keyword>
<keyword id="KW-0479">Metal-binding</keyword>
<keyword id="KW-0547">Nucleotide-binding</keyword>
<keyword id="KW-0648">Protein biosynthesis</keyword>
<keyword id="KW-1185">Reference proteome</keyword>
<keyword id="KW-0862">Zinc</keyword>
<proteinExistence type="inferred from homology"/>
<comment type="function">
    <text evidence="1">Catalyzes the attachment of isoleucine to tRNA(Ile). As IleRS can inadvertently accommodate and process structurally similar amino acids such as valine, to avoid such errors it has two additional distinct tRNA(Ile)-dependent editing activities. One activity is designated as 'pretransfer' editing and involves the hydrolysis of activated Val-AMP. The other activity is designated 'posttransfer' editing and involves deacylation of mischarged Val-tRNA(Ile).</text>
</comment>
<comment type="catalytic activity">
    <reaction evidence="1">
        <text>tRNA(Ile) + L-isoleucine + ATP = L-isoleucyl-tRNA(Ile) + AMP + diphosphate</text>
        <dbReference type="Rhea" id="RHEA:11060"/>
        <dbReference type="Rhea" id="RHEA-COMP:9666"/>
        <dbReference type="Rhea" id="RHEA-COMP:9695"/>
        <dbReference type="ChEBI" id="CHEBI:30616"/>
        <dbReference type="ChEBI" id="CHEBI:33019"/>
        <dbReference type="ChEBI" id="CHEBI:58045"/>
        <dbReference type="ChEBI" id="CHEBI:78442"/>
        <dbReference type="ChEBI" id="CHEBI:78528"/>
        <dbReference type="ChEBI" id="CHEBI:456215"/>
        <dbReference type="EC" id="6.1.1.5"/>
    </reaction>
</comment>
<comment type="cofactor">
    <cofactor evidence="1">
        <name>Zn(2+)</name>
        <dbReference type="ChEBI" id="CHEBI:29105"/>
    </cofactor>
    <text evidence="1">Binds 1 zinc ion per subunit.</text>
</comment>
<comment type="subunit">
    <text evidence="1">Monomer.</text>
</comment>
<comment type="subcellular location">
    <subcellularLocation>
        <location evidence="1">Cytoplasm</location>
    </subcellularLocation>
</comment>
<comment type="domain">
    <text evidence="1">IleRS has two distinct active sites: one for aminoacylation and one for editing. The misactivated valine is translocated from the active site to the editing site, which sterically excludes the correctly activated isoleucine. The single editing site contains two valyl binding pockets, one specific for each substrate (Val-AMP or Val-tRNA(Ile)).</text>
</comment>
<comment type="similarity">
    <text evidence="1">Belongs to the class-I aminoacyl-tRNA synthetase family. IleS type 1 subfamily.</text>
</comment>
<name>SYI1_BACAN</name>
<sequence>MEYKNTLLMPKTEFPMRGNLPKREPAMQEKWAEMNIYETVQEHTKGRPLFVLHDGPPYANGDIHMGHALNKVLKDFIVRYKSMTGFCAPYVPGWDTHGLPIEQALTNKGVKRKEMTVAEFRKLCAEYAYEQVERQREQFKRLGVRADWDNPYITLEPAYEAQQIKVFGDMAKKGYIYKGQKPVYWSPTSESALAEAEIEYQDKKSASIYVAFSVKDGKNVLEGDEKYIIWTTTPWTLPANLGISVHPELEYAIVKVNDEKYIIASELFETVAKTLEWENAEVVKTVKGSELEYTVAKHPFYDRDSLVMLGDHVTTDAGTGCVHTAPGHGEDDFIVGKKYGLEVLCPVDDKGVLTEEAPGFEGLFYDKANKPITEKLEEVGALLKLTFITHSYPHDWRTKKPIIFRATAQWFASIEAFRKELLEAVAETKWVPAWGETRLHNMVRDRGDWCISRQRAWGVPIPVFYAENGDPIITDETINHVADLFREHGSNVWFEREAKDLLPEGFTHPGSPNGEFRKETDIMDVWFDSGSSHQAVLEERDDLQRPADLYLEGSDQYRGWFNSSLSTAVAVTGKAPYKGVLSHGFVLDGEGRKMSKSIGNIVVPKKIMDQLGGDILRLWVSSVDYQSDVRISDDILKQVAEVYRKIRNTFRFLLGNLDDFKPSENTVAVAELREVDRYMLVKLNDLITKVKEAYETYDFAAVYHAIHNFCTIDLSSFYLDFAKDILYIEGANHEDRRAIQTVLYDVLVALTKLVTPILPHTADEVWPYIPGVTEESVQLTDMPEAVQLDDAEALKTKWDAFMTLRDDVLKALEVARNEKVIGKSLNASITLYPTAEMKAMLESINEDLKQLFIVSEYKLGGMMEEAPADAPKYEHTAVVVAQATGETCERCWVVSETIGKDAEHETLCERCATVVKENYVK</sequence>
<protein>
    <recommendedName>
        <fullName evidence="1">Isoleucine--tRNA ligase 1</fullName>
        <ecNumber evidence="1">6.1.1.5</ecNumber>
    </recommendedName>
    <alternativeName>
        <fullName evidence="1">Isoleucyl-tRNA synthetase 1</fullName>
        <shortName evidence="1">IleRS 1</shortName>
    </alternativeName>
</protein>